<evidence type="ECO:0000256" key="1">
    <source>
        <dbReference type="SAM" id="MobiDB-lite"/>
    </source>
</evidence>
<evidence type="ECO:0000305" key="2"/>
<feature type="chain" id="PRO_0000321857" description="Protein FlaG">
    <location>
        <begin position="1"/>
        <end position="153"/>
    </location>
</feature>
<feature type="region of interest" description="Disordered" evidence="1">
    <location>
        <begin position="1"/>
        <end position="74"/>
    </location>
</feature>
<feature type="compositionally biased region" description="Polar residues" evidence="1">
    <location>
        <begin position="1"/>
        <end position="41"/>
    </location>
</feature>
<feature type="compositionally biased region" description="Basic and acidic residues" evidence="1">
    <location>
        <begin position="42"/>
        <end position="61"/>
    </location>
</feature>
<accession>A5F6C3</accession>
<accession>C3M2X3</accession>
<accession>O34224</accession>
<accession>Q9KQ62</accession>
<comment type="similarity">
    <text evidence="2">To FlaG in other Vibrio species.</text>
</comment>
<protein>
    <recommendedName>
        <fullName>Protein FlaG</fullName>
    </recommendedName>
</protein>
<dbReference type="EMBL" id="CP000627">
    <property type="protein sequence ID" value="ABQ21904.1"/>
    <property type="molecule type" value="Genomic_DNA"/>
</dbReference>
<dbReference type="EMBL" id="CP001235">
    <property type="protein sequence ID" value="ACP10247.1"/>
    <property type="molecule type" value="Genomic_DNA"/>
</dbReference>
<dbReference type="EMBL" id="AF007122">
    <property type="protein sequence ID" value="AAC01558.1"/>
    <property type="molecule type" value="Genomic_DNA"/>
</dbReference>
<dbReference type="RefSeq" id="WP_000405330.1">
    <property type="nucleotide sequence ID" value="NZ_JAACZH010000001.1"/>
</dbReference>
<dbReference type="SMR" id="A5F6C3"/>
<dbReference type="GeneID" id="69719239"/>
<dbReference type="KEGG" id="vco:VC0395_A1725"/>
<dbReference type="KEGG" id="vcr:VC395_2255"/>
<dbReference type="PATRIC" id="fig|345073.21.peg.2179"/>
<dbReference type="eggNOG" id="COG1334">
    <property type="taxonomic scope" value="Bacteria"/>
</dbReference>
<dbReference type="HOGENOM" id="CLU_120910_4_1_6"/>
<dbReference type="OrthoDB" id="5741693at2"/>
<dbReference type="Proteomes" id="UP000000249">
    <property type="component" value="Chromosome 2"/>
</dbReference>
<dbReference type="Gene3D" id="3.30.160.170">
    <property type="entry name" value="FlaG-like"/>
    <property type="match status" value="1"/>
</dbReference>
<dbReference type="InterPro" id="IPR005186">
    <property type="entry name" value="FlaG"/>
</dbReference>
<dbReference type="InterPro" id="IPR035924">
    <property type="entry name" value="FlaG-like_sf"/>
</dbReference>
<dbReference type="NCBIfam" id="NF006465">
    <property type="entry name" value="PRK08868.1"/>
    <property type="match status" value="1"/>
</dbReference>
<dbReference type="PANTHER" id="PTHR37166">
    <property type="entry name" value="PROTEIN FLAG"/>
    <property type="match status" value="1"/>
</dbReference>
<dbReference type="PANTHER" id="PTHR37166:SF1">
    <property type="entry name" value="PROTEIN FLAG"/>
    <property type="match status" value="1"/>
</dbReference>
<dbReference type="Pfam" id="PF03646">
    <property type="entry name" value="FlaG"/>
    <property type="match status" value="1"/>
</dbReference>
<dbReference type="SUPFAM" id="SSF160214">
    <property type="entry name" value="FlaG-like"/>
    <property type="match status" value="1"/>
</dbReference>
<proteinExistence type="predicted"/>
<sequence>MEIPSYASNIQPYGSQSGTKIASENDNAKSVSLSGDNSRSVSRTDKLSEHFSEQVRARQQESAETAMAQAKQRQRLNEEQLAKMVEQMNEFVKSINKGLSFRLDRESGREVVTIYEASTGDIIRQIPEEEMLEVLRRLAREQDHRSGLLMAKV</sequence>
<organism>
    <name type="scientific">Vibrio cholerae serotype O1 (strain ATCC 39541 / Classical Ogawa 395 / O395)</name>
    <dbReference type="NCBI Taxonomy" id="345073"/>
    <lineage>
        <taxon>Bacteria</taxon>
        <taxon>Pseudomonadati</taxon>
        <taxon>Pseudomonadota</taxon>
        <taxon>Gammaproteobacteria</taxon>
        <taxon>Vibrionales</taxon>
        <taxon>Vibrionaceae</taxon>
        <taxon>Vibrio</taxon>
    </lineage>
</organism>
<name>FLAG_VIBC3</name>
<reference key="1">
    <citation type="submission" date="2007-03" db="EMBL/GenBank/DDBJ databases">
        <authorList>
            <person name="Heidelberg J."/>
        </authorList>
    </citation>
    <scope>NUCLEOTIDE SEQUENCE [LARGE SCALE GENOMIC DNA]</scope>
    <source>
        <strain>ATCC 39541 / Classical Ogawa 395 / O395</strain>
    </source>
</reference>
<reference key="2">
    <citation type="journal article" date="2008" name="PLoS ONE">
        <title>A recalibrated molecular clock and independent origins for the cholera pandemic clones.</title>
        <authorList>
            <person name="Feng L."/>
            <person name="Reeves P.R."/>
            <person name="Lan R."/>
            <person name="Ren Y."/>
            <person name="Gao C."/>
            <person name="Zhou Z."/>
            <person name="Ren Y."/>
            <person name="Cheng J."/>
            <person name="Wang W."/>
            <person name="Wang J."/>
            <person name="Qian W."/>
            <person name="Li D."/>
            <person name="Wang L."/>
        </authorList>
    </citation>
    <scope>NUCLEOTIDE SEQUENCE [LARGE SCALE GENOMIC DNA]</scope>
    <source>
        <strain>ATCC 39541 / Classical Ogawa 395 / O395</strain>
    </source>
</reference>
<reference key="3">
    <citation type="journal article" date="1998" name="J. Bacteriol.">
        <title>Differential regulation of multiple flagellins in Vibrio cholerae.</title>
        <authorList>
            <person name="Klose K.E."/>
            <person name="Mekalanos J.J."/>
        </authorList>
    </citation>
    <scope>NUCLEOTIDE SEQUENCE [GENOMIC DNA] OF 1-70</scope>
</reference>
<gene>
    <name type="primary">flaG</name>
    <name type="ordered locus">VC0395_A1725</name>
    <name type="ordered locus">VC395_2255</name>
</gene>